<proteinExistence type="inferred from homology"/>
<comment type="function">
    <text evidence="1">Catalyzes two activities which are involved in the cyclic version of arginine biosynthesis: the synthesis of N-acetylglutamate from glutamate and acetyl-CoA as the acetyl donor, and of ornithine by transacetylation between N(2)-acetylornithine and glutamate.</text>
</comment>
<comment type="catalytic activity">
    <reaction evidence="1">
        <text>N(2)-acetyl-L-ornithine + L-glutamate = N-acetyl-L-glutamate + L-ornithine</text>
        <dbReference type="Rhea" id="RHEA:15349"/>
        <dbReference type="ChEBI" id="CHEBI:29985"/>
        <dbReference type="ChEBI" id="CHEBI:44337"/>
        <dbReference type="ChEBI" id="CHEBI:46911"/>
        <dbReference type="ChEBI" id="CHEBI:57805"/>
        <dbReference type="EC" id="2.3.1.35"/>
    </reaction>
</comment>
<comment type="catalytic activity">
    <reaction evidence="1">
        <text>L-glutamate + acetyl-CoA = N-acetyl-L-glutamate + CoA + H(+)</text>
        <dbReference type="Rhea" id="RHEA:24292"/>
        <dbReference type="ChEBI" id="CHEBI:15378"/>
        <dbReference type="ChEBI" id="CHEBI:29985"/>
        <dbReference type="ChEBI" id="CHEBI:44337"/>
        <dbReference type="ChEBI" id="CHEBI:57287"/>
        <dbReference type="ChEBI" id="CHEBI:57288"/>
        <dbReference type="EC" id="2.3.1.1"/>
    </reaction>
</comment>
<comment type="pathway">
    <text evidence="1">Amino-acid biosynthesis; L-arginine biosynthesis; L-ornithine and N-acetyl-L-glutamate from L-glutamate and N(2)-acetyl-L-ornithine (cyclic): step 1/1.</text>
</comment>
<comment type="pathway">
    <text evidence="1">Amino-acid biosynthesis; L-arginine biosynthesis; N(2)-acetyl-L-ornithine from L-glutamate: step 1/4.</text>
</comment>
<comment type="subunit">
    <text evidence="1">Heterotetramer of two alpha and two beta chains.</text>
</comment>
<comment type="subcellular location">
    <subcellularLocation>
        <location evidence="1">Cytoplasm</location>
    </subcellularLocation>
</comment>
<comment type="similarity">
    <text evidence="1 2">Belongs to the ArgJ family.</text>
</comment>
<protein>
    <recommendedName>
        <fullName evidence="1">Arginine biosynthesis bifunctional protein ArgJ</fullName>
    </recommendedName>
    <domain>
        <recommendedName>
            <fullName evidence="1">Glutamate N-acetyltransferase</fullName>
            <ecNumber evidence="1">2.3.1.35</ecNumber>
        </recommendedName>
        <alternativeName>
            <fullName evidence="1">Ornithine acetyltransferase</fullName>
            <shortName evidence="1">OATase</shortName>
        </alternativeName>
        <alternativeName>
            <fullName evidence="1">Ornithine transacetylase</fullName>
        </alternativeName>
    </domain>
    <domain>
        <recommendedName>
            <fullName evidence="1">Amino-acid acetyltransferase</fullName>
            <ecNumber evidence="1">2.3.1.1</ecNumber>
        </recommendedName>
        <alternativeName>
            <fullName evidence="1">N-acetylglutamate synthase</fullName>
            <shortName evidence="1">AGSase</shortName>
        </alternativeName>
    </domain>
    <component>
        <recommendedName>
            <fullName evidence="1">Arginine biosynthesis bifunctional protein ArgJ alpha chain</fullName>
        </recommendedName>
    </component>
    <component>
        <recommendedName>
            <fullName evidence="1">Arginine biosynthesis bifunctional protein ArgJ beta chain</fullName>
        </recommendedName>
    </component>
</protein>
<sequence>MTDLAGTTRLLRAQGVTAPAGFRAAGVAAGIKASGALDLALVFNEGPDYAAAGVFTRNQVKAAPVLWTQQVLTTGRLRAVILNSGGANACTGPAGFADTHATAEAVAAALSDWGTETGAIEVAVCSTGLIGDRLPMDKLLAGVAHVVHEMHGGLVGGDEAAHAIMTTDNVPKQVALHHHDNWTVGGMAKGAGMLAPSLATMLCVLTTDAAAEPAALERALRRAAAATFDRLDIDGSCSTNDTVLLLSSGASEIPPAQADLDEAVLRVCDDLCAQLQADAEGVTKRVTVTVTGAATEDDALVAARQIARDSLVKTALFGSDPNWGRVLAAVGMAPITLDPDRISVSFNGAAVCVHGVGAPGAREVDLSDADIDITVDLGVGDGQARIRTTDLSHAYVEENSAYSS</sequence>
<keyword id="KW-0012">Acyltransferase</keyword>
<keyword id="KW-0028">Amino-acid biosynthesis</keyword>
<keyword id="KW-0055">Arginine biosynthesis</keyword>
<keyword id="KW-0068">Autocatalytic cleavage</keyword>
<keyword id="KW-0963">Cytoplasm</keyword>
<keyword id="KW-0511">Multifunctional enzyme</keyword>
<keyword id="KW-1185">Reference proteome</keyword>
<keyword id="KW-0808">Transferase</keyword>
<evidence type="ECO:0000255" key="1">
    <source>
        <dbReference type="HAMAP-Rule" id="MF_01106"/>
    </source>
</evidence>
<evidence type="ECO:0000305" key="2"/>
<accession>P9WPZ2</accession>
<accession>L0TA91</accession>
<accession>P63571</accession>
<accession>P94988</accession>
<feature type="chain" id="PRO_0000426866" description="Arginine biosynthesis bifunctional protein ArgJ alpha chain" evidence="1">
    <location>
        <begin position="1"/>
        <end position="199"/>
    </location>
</feature>
<feature type="chain" id="PRO_0000426867" description="Arginine biosynthesis bifunctional protein ArgJ beta chain" evidence="1">
    <location>
        <begin position="200"/>
        <end position="404"/>
    </location>
</feature>
<feature type="active site" description="Nucleophile" evidence="1">
    <location>
        <position position="200"/>
    </location>
</feature>
<feature type="binding site" evidence="1">
    <location>
        <position position="166"/>
    </location>
    <ligand>
        <name>substrate</name>
    </ligand>
</feature>
<feature type="binding site" evidence="1">
    <location>
        <position position="189"/>
    </location>
    <ligand>
        <name>substrate</name>
    </ligand>
</feature>
<feature type="binding site" evidence="1">
    <location>
        <position position="200"/>
    </location>
    <ligand>
        <name>substrate</name>
    </ligand>
</feature>
<feature type="binding site" evidence="1">
    <location>
        <position position="280"/>
    </location>
    <ligand>
        <name>substrate</name>
    </ligand>
</feature>
<feature type="binding site" evidence="1">
    <location>
        <position position="399"/>
    </location>
    <ligand>
        <name>substrate</name>
    </ligand>
</feature>
<feature type="binding site" evidence="1">
    <location>
        <position position="404"/>
    </location>
    <ligand>
        <name>substrate</name>
    </ligand>
</feature>
<feature type="site" description="Involved in the stabilization of negative charge on the oxyanion by the formation of the oxyanion hole" evidence="1">
    <location>
        <position position="127"/>
    </location>
</feature>
<feature type="site" description="Involved in the stabilization of negative charge on the oxyanion by the formation of the oxyanion hole" evidence="1">
    <location>
        <position position="128"/>
    </location>
</feature>
<feature type="site" description="Cleavage; by autolysis" evidence="1">
    <location>
        <begin position="199"/>
        <end position="200"/>
    </location>
</feature>
<name>ARGJ_MYCTO</name>
<dbReference type="EC" id="2.3.1.35" evidence="1"/>
<dbReference type="EC" id="2.3.1.1" evidence="1"/>
<dbReference type="EMBL" id="AE000516">
    <property type="protein sequence ID" value="AAK45960.1"/>
    <property type="molecule type" value="Genomic_DNA"/>
</dbReference>
<dbReference type="PIR" id="H70620">
    <property type="entry name" value="H70620"/>
</dbReference>
<dbReference type="RefSeq" id="WP_003408160.1">
    <property type="nucleotide sequence ID" value="NZ_KK341227.1"/>
</dbReference>
<dbReference type="SMR" id="P9WPZ2"/>
<dbReference type="KEGG" id="mtc:MT1691"/>
<dbReference type="PATRIC" id="fig|83331.31.peg.1818"/>
<dbReference type="HOGENOM" id="CLU_027172_2_0_11"/>
<dbReference type="UniPathway" id="UPA00068">
    <property type="reaction ID" value="UER00106"/>
</dbReference>
<dbReference type="UniPathway" id="UPA00068">
    <property type="reaction ID" value="UER00111"/>
</dbReference>
<dbReference type="Proteomes" id="UP000001020">
    <property type="component" value="Chromosome"/>
</dbReference>
<dbReference type="GO" id="GO:0005737">
    <property type="term" value="C:cytoplasm"/>
    <property type="evidence" value="ECO:0007669"/>
    <property type="project" value="UniProtKB-SubCell"/>
</dbReference>
<dbReference type="GO" id="GO:0004358">
    <property type="term" value="F:glutamate N-acetyltransferase activity"/>
    <property type="evidence" value="ECO:0007669"/>
    <property type="project" value="UniProtKB-UniRule"/>
</dbReference>
<dbReference type="GO" id="GO:0004042">
    <property type="term" value="F:L-glutamate N-acetyltransferase activity"/>
    <property type="evidence" value="ECO:0007669"/>
    <property type="project" value="UniProtKB-UniRule"/>
</dbReference>
<dbReference type="GO" id="GO:0006526">
    <property type="term" value="P:L-arginine biosynthetic process"/>
    <property type="evidence" value="ECO:0007669"/>
    <property type="project" value="UniProtKB-UniRule"/>
</dbReference>
<dbReference type="GO" id="GO:0006592">
    <property type="term" value="P:ornithine biosynthetic process"/>
    <property type="evidence" value="ECO:0007669"/>
    <property type="project" value="TreeGrafter"/>
</dbReference>
<dbReference type="CDD" id="cd02152">
    <property type="entry name" value="OAT"/>
    <property type="match status" value="1"/>
</dbReference>
<dbReference type="FunFam" id="3.10.20.340:FF:000005">
    <property type="entry name" value="Arginine biosynthesis bifunctional protein ArgJ"/>
    <property type="match status" value="1"/>
</dbReference>
<dbReference type="FunFam" id="3.30.2330.10:FF:000002">
    <property type="entry name" value="Arginine biosynthesis bifunctional protein ArgJ"/>
    <property type="match status" value="1"/>
</dbReference>
<dbReference type="FunFam" id="3.60.70.12:FF:000005">
    <property type="entry name" value="Arginine biosynthesis bifunctional protein ArgJ"/>
    <property type="match status" value="1"/>
</dbReference>
<dbReference type="Gene3D" id="3.30.2330.10">
    <property type="entry name" value="arginine biosynthesis bifunctional protein suprefamily"/>
    <property type="match status" value="1"/>
</dbReference>
<dbReference type="Gene3D" id="3.10.20.340">
    <property type="entry name" value="ArgJ beta chain, C-terminal domain"/>
    <property type="match status" value="1"/>
</dbReference>
<dbReference type="Gene3D" id="3.60.70.12">
    <property type="entry name" value="L-amino peptidase D-ALA esterase/amidase"/>
    <property type="match status" value="1"/>
</dbReference>
<dbReference type="HAMAP" id="MF_01106">
    <property type="entry name" value="ArgJ"/>
    <property type="match status" value="1"/>
</dbReference>
<dbReference type="InterPro" id="IPR002813">
    <property type="entry name" value="Arg_biosynth_ArgJ"/>
</dbReference>
<dbReference type="InterPro" id="IPR016117">
    <property type="entry name" value="ArgJ-like_dom_sf"/>
</dbReference>
<dbReference type="InterPro" id="IPR042195">
    <property type="entry name" value="ArgJ_beta_C"/>
</dbReference>
<dbReference type="NCBIfam" id="TIGR00120">
    <property type="entry name" value="ArgJ"/>
    <property type="match status" value="1"/>
</dbReference>
<dbReference type="NCBIfam" id="NF003802">
    <property type="entry name" value="PRK05388.1"/>
    <property type="match status" value="1"/>
</dbReference>
<dbReference type="PANTHER" id="PTHR23100">
    <property type="entry name" value="ARGININE BIOSYNTHESIS BIFUNCTIONAL PROTEIN ARGJ"/>
    <property type="match status" value="1"/>
</dbReference>
<dbReference type="PANTHER" id="PTHR23100:SF0">
    <property type="entry name" value="ARGININE BIOSYNTHESIS BIFUNCTIONAL PROTEIN ARGJ, MITOCHONDRIAL"/>
    <property type="match status" value="1"/>
</dbReference>
<dbReference type="Pfam" id="PF01960">
    <property type="entry name" value="ArgJ"/>
    <property type="match status" value="1"/>
</dbReference>
<dbReference type="SUPFAM" id="SSF56266">
    <property type="entry name" value="DmpA/ArgJ-like"/>
    <property type="match status" value="1"/>
</dbReference>
<gene>
    <name evidence="1" type="primary">argJ</name>
    <name type="ordered locus">MT1691</name>
</gene>
<reference key="1">
    <citation type="journal article" date="2002" name="J. Bacteriol.">
        <title>Whole-genome comparison of Mycobacterium tuberculosis clinical and laboratory strains.</title>
        <authorList>
            <person name="Fleischmann R.D."/>
            <person name="Alland D."/>
            <person name="Eisen J.A."/>
            <person name="Carpenter L."/>
            <person name="White O."/>
            <person name="Peterson J.D."/>
            <person name="DeBoy R.T."/>
            <person name="Dodson R.J."/>
            <person name="Gwinn M.L."/>
            <person name="Haft D.H."/>
            <person name="Hickey E.K."/>
            <person name="Kolonay J.F."/>
            <person name="Nelson W.C."/>
            <person name="Umayam L.A."/>
            <person name="Ermolaeva M.D."/>
            <person name="Salzberg S.L."/>
            <person name="Delcher A."/>
            <person name="Utterback T.R."/>
            <person name="Weidman J.F."/>
            <person name="Khouri H.M."/>
            <person name="Gill J."/>
            <person name="Mikula A."/>
            <person name="Bishai W."/>
            <person name="Jacobs W.R. Jr."/>
            <person name="Venter J.C."/>
            <person name="Fraser C.M."/>
        </authorList>
    </citation>
    <scope>NUCLEOTIDE SEQUENCE [LARGE SCALE GENOMIC DNA]</scope>
    <source>
        <strain>CDC 1551 / Oshkosh</strain>
    </source>
</reference>
<organism>
    <name type="scientific">Mycobacterium tuberculosis (strain CDC 1551 / Oshkosh)</name>
    <dbReference type="NCBI Taxonomy" id="83331"/>
    <lineage>
        <taxon>Bacteria</taxon>
        <taxon>Bacillati</taxon>
        <taxon>Actinomycetota</taxon>
        <taxon>Actinomycetes</taxon>
        <taxon>Mycobacteriales</taxon>
        <taxon>Mycobacteriaceae</taxon>
        <taxon>Mycobacterium</taxon>
        <taxon>Mycobacterium tuberculosis complex</taxon>
    </lineage>
</organism>